<comment type="function">
    <text evidence="6">May regulate an early stage of the zoospore pathway.</text>
</comment>
<comment type="catalytic activity">
    <reaction evidence="2">
        <text>L-seryl-[protein] + ATP = O-phospho-L-seryl-[protein] + ADP + H(+)</text>
        <dbReference type="Rhea" id="RHEA:17989"/>
        <dbReference type="Rhea" id="RHEA-COMP:9863"/>
        <dbReference type="Rhea" id="RHEA-COMP:11604"/>
        <dbReference type="ChEBI" id="CHEBI:15378"/>
        <dbReference type="ChEBI" id="CHEBI:29999"/>
        <dbReference type="ChEBI" id="CHEBI:30616"/>
        <dbReference type="ChEBI" id="CHEBI:83421"/>
        <dbReference type="ChEBI" id="CHEBI:456216"/>
        <dbReference type="EC" id="2.7.11.1"/>
    </reaction>
</comment>
<comment type="catalytic activity">
    <reaction evidence="2">
        <text>L-threonyl-[protein] + ATP = O-phospho-L-threonyl-[protein] + ADP + H(+)</text>
        <dbReference type="Rhea" id="RHEA:46608"/>
        <dbReference type="Rhea" id="RHEA-COMP:11060"/>
        <dbReference type="Rhea" id="RHEA-COMP:11605"/>
        <dbReference type="ChEBI" id="CHEBI:15378"/>
        <dbReference type="ChEBI" id="CHEBI:30013"/>
        <dbReference type="ChEBI" id="CHEBI:30616"/>
        <dbReference type="ChEBI" id="CHEBI:61977"/>
        <dbReference type="ChEBI" id="CHEBI:456216"/>
        <dbReference type="EC" id="2.7.11.1"/>
    </reaction>
</comment>
<comment type="subunit">
    <text evidence="7">Interacts with BZP1.</text>
</comment>
<comment type="developmental stage">
    <text evidence="6">Expressed in zoospores. Not detected in non-sporulating hyphae, hyphae decorated with sporangia, ungerminated sporangia and directly germinating sporangia.</text>
</comment>
<comment type="induction">
    <text evidence="6">Up-regulated by exposure of sporangia to cool water, which initiates the cleavage of sporangial cytoplasm into individual zoospores.</text>
</comment>
<comment type="similarity">
    <text evidence="9">Belongs to the protein kinase superfamily. CAMK Ser/Thr protein kinase family.</text>
</comment>
<protein>
    <recommendedName>
        <fullName evidence="8">Serine/threonine-protein kinase PKZ1</fullName>
        <shortName evidence="8">Pipkz1</shortName>
        <ecNumber>2.7.11.1</ecNumber>
    </recommendedName>
    <alternativeName>
        <fullName evidence="10">Cleavage-associated kinase</fullName>
    </alternativeName>
</protein>
<keyword id="KW-0067">ATP-binding</keyword>
<keyword id="KW-0418">Kinase</keyword>
<keyword id="KW-0547">Nucleotide-binding</keyword>
<keyword id="KW-0723">Serine/threonine-protein kinase</keyword>
<keyword id="KW-0808">Transferase</keyword>
<sequence length="399" mass="43173">MLRLGRSAASEVSSIRNSLQLQLEQRGARPMQCAYQTQSHSNPEGAKRGRSPMSLAVMGAAALSVGLELQTDGIAQARAAMEPGTQLQRHKWQLFDQIGAGAFGVVRLGMHEESGEVAAVKIVPLENPNDQRSYPALEREIAALKLVKALGGHNSIVDLRDVYVEGRKLFLVTELARGGELFEQIVAYGSFPELKARDVAREMASALSFMHRHGLVHKDVKPENILMSARVVDHNSGVYRKSNRHESSSLVKLADFGSAGPASVNTNLEDIGTAAYLPPEVLNSGMCTSACDMWALGCVLYIMLSGSHPFDLDGMSADSVVEHRVKSEPVTFDFSAWDNVSPHAKDLISKLLVKDPTLRLTADQMLQHPWMNASAEAAAAGLRRPSPLLAGQPIPRGPA</sequence>
<feature type="chain" id="PRO_0000408773" description="Serine/threonine-protein kinase PKZ1">
    <location>
        <begin position="1"/>
        <end position="399"/>
    </location>
</feature>
<feature type="domain" description="Protein kinase" evidence="3">
    <location>
        <begin position="92"/>
        <end position="371"/>
    </location>
</feature>
<feature type="region of interest" description="Disordered" evidence="5">
    <location>
        <begin position="30"/>
        <end position="50"/>
    </location>
</feature>
<feature type="active site" description="Proton acceptor" evidence="1 3 4">
    <location>
        <position position="219"/>
    </location>
</feature>
<feature type="binding site" evidence="1 3">
    <location>
        <begin position="98"/>
        <end position="106"/>
    </location>
    <ligand>
        <name>ATP</name>
        <dbReference type="ChEBI" id="CHEBI:30616"/>
    </ligand>
</feature>
<feature type="binding site" evidence="1 3">
    <location>
        <position position="121"/>
    </location>
    <ligand>
        <name>ATP</name>
        <dbReference type="ChEBI" id="CHEBI:30616"/>
    </ligand>
</feature>
<dbReference type="EC" id="2.7.11.1"/>
<dbReference type="EMBL" id="AY093611">
    <property type="protein sequence ID" value="AAM21157.1"/>
    <property type="molecule type" value="Genomic_DNA"/>
</dbReference>
<dbReference type="SMR" id="Q8GVC7"/>
<dbReference type="VEuPathDB" id="FungiDB:PITG_06236"/>
<dbReference type="GO" id="GO:0005524">
    <property type="term" value="F:ATP binding"/>
    <property type="evidence" value="ECO:0007669"/>
    <property type="project" value="UniProtKB-KW"/>
</dbReference>
<dbReference type="GO" id="GO:0106310">
    <property type="term" value="F:protein serine kinase activity"/>
    <property type="evidence" value="ECO:0007669"/>
    <property type="project" value="RHEA"/>
</dbReference>
<dbReference type="GO" id="GO:0004674">
    <property type="term" value="F:protein serine/threonine kinase activity"/>
    <property type="evidence" value="ECO:0007669"/>
    <property type="project" value="UniProtKB-KW"/>
</dbReference>
<dbReference type="FunFam" id="1.10.510.10:FF:000571">
    <property type="entry name" value="Maternal embryonic leucine zipper kinase"/>
    <property type="match status" value="1"/>
</dbReference>
<dbReference type="Gene3D" id="3.30.200.20">
    <property type="entry name" value="Phosphorylase Kinase, domain 1"/>
    <property type="match status" value="1"/>
</dbReference>
<dbReference type="Gene3D" id="1.10.510.10">
    <property type="entry name" value="Transferase(Phosphotransferase) domain 1"/>
    <property type="match status" value="1"/>
</dbReference>
<dbReference type="InterPro" id="IPR011009">
    <property type="entry name" value="Kinase-like_dom_sf"/>
</dbReference>
<dbReference type="InterPro" id="IPR000719">
    <property type="entry name" value="Prot_kinase_dom"/>
</dbReference>
<dbReference type="InterPro" id="IPR017441">
    <property type="entry name" value="Protein_kinase_ATP_BS"/>
</dbReference>
<dbReference type="InterPro" id="IPR008271">
    <property type="entry name" value="Ser/Thr_kinase_AS"/>
</dbReference>
<dbReference type="PANTHER" id="PTHR24347">
    <property type="entry name" value="SERINE/THREONINE-PROTEIN KINASE"/>
    <property type="match status" value="1"/>
</dbReference>
<dbReference type="Pfam" id="PF00069">
    <property type="entry name" value="Pkinase"/>
    <property type="match status" value="1"/>
</dbReference>
<dbReference type="SMART" id="SM00220">
    <property type="entry name" value="S_TKc"/>
    <property type="match status" value="1"/>
</dbReference>
<dbReference type="SUPFAM" id="SSF56112">
    <property type="entry name" value="Protein kinase-like (PK-like)"/>
    <property type="match status" value="1"/>
</dbReference>
<dbReference type="PROSITE" id="PS00107">
    <property type="entry name" value="PROTEIN_KINASE_ATP"/>
    <property type="match status" value="1"/>
</dbReference>
<dbReference type="PROSITE" id="PS50011">
    <property type="entry name" value="PROTEIN_KINASE_DOM"/>
    <property type="match status" value="1"/>
</dbReference>
<dbReference type="PROSITE" id="PS00108">
    <property type="entry name" value="PROTEIN_KINASE_ST"/>
    <property type="match status" value="1"/>
</dbReference>
<gene>
    <name evidence="8" type="primary">PKZ1</name>
</gene>
<accession>Q8GVC7</accession>
<name>PKZ1_PHYIN</name>
<organism>
    <name type="scientific">Phytophthora infestans</name>
    <name type="common">Potato late blight agent</name>
    <name type="synonym">Botrytis infestans</name>
    <dbReference type="NCBI Taxonomy" id="4787"/>
    <lineage>
        <taxon>Eukaryota</taxon>
        <taxon>Sar</taxon>
        <taxon>Stramenopiles</taxon>
        <taxon>Oomycota</taxon>
        <taxon>Peronosporales</taxon>
        <taxon>Peronosporaceae</taxon>
        <taxon>Phytophthora</taxon>
    </lineage>
</organism>
<proteinExistence type="evidence at protein level"/>
<evidence type="ECO:0000250" key="1">
    <source>
        <dbReference type="UniProtKB" id="P28523"/>
    </source>
</evidence>
<evidence type="ECO:0000250" key="2">
    <source>
        <dbReference type="UniProtKB" id="P31749"/>
    </source>
</evidence>
<evidence type="ECO:0000255" key="3">
    <source>
        <dbReference type="PROSITE-ProRule" id="PRU00159"/>
    </source>
</evidence>
<evidence type="ECO:0000255" key="4">
    <source>
        <dbReference type="PROSITE-ProRule" id="PRU10027"/>
    </source>
</evidence>
<evidence type="ECO:0000256" key="5">
    <source>
        <dbReference type="SAM" id="MobiDB-lite"/>
    </source>
</evidence>
<evidence type="ECO:0000269" key="6">
    <source>
    </source>
</evidence>
<evidence type="ECO:0000269" key="7">
    <source>
    </source>
</evidence>
<evidence type="ECO:0000303" key="8">
    <source>
    </source>
</evidence>
<evidence type="ECO:0000305" key="9"/>
<evidence type="ECO:0000312" key="10">
    <source>
        <dbReference type="EMBL" id="AAM21157.1"/>
    </source>
</evidence>
<reference evidence="9 10" key="1">
    <citation type="journal article" date="2002" name="Eukaryot. Cell">
        <title>Novel protein kinase induced during sporangial cleavage in the oomycete Phytophthora infestans.</title>
        <authorList>
            <person name="Judelson H.S."/>
            <person name="Roberts S."/>
        </authorList>
    </citation>
    <scope>NUCLEOTIDE SEQUENCE [GENOMIC DNA]</scope>
    <scope>FUNCTION</scope>
    <scope>DEVELOPMENTAL STAGE</scope>
    <scope>INDUCTION</scope>
    <source>
        <strain evidence="10">2.20</strain>
        <strain evidence="6">Isolate 1306</strain>
        <strain evidence="6">Isolate 88069</strain>
    </source>
</reference>
<reference evidence="9" key="2">
    <citation type="journal article" date="2005" name="Mol. Microbiol.">
        <title>A bZIP transcription factor from Phytophthora interacts with a protein kinase and is required for zoospore motility and plant infection.</title>
        <authorList>
            <person name="Blanco F.A."/>
            <person name="Judelson H.S."/>
        </authorList>
    </citation>
    <scope>INTERACTION WITH BZP1</scope>
    <source>
        <strain evidence="7">Isolate 1306</strain>
        <strain evidence="7">Isolate 88069</strain>
    </source>
</reference>